<protein>
    <recommendedName>
        <fullName evidence="1">UPF0354 protein SAR1821</fullName>
    </recommendedName>
</protein>
<comment type="similarity">
    <text evidence="1">Belongs to the UPF0354 family.</text>
</comment>
<sequence>MNTFQMRDKLKERLSHLDVDFKFNREEETLRIYRTDNNKGITIKLNAIVAKYEDKKEKIVDEIVYYVDEAIAQMADKTLESISSSQIMPVIRATSFDKKTKQGVPFIYDEHTAETAVYYAVDLGKSYRLIDESMLEDLKLTEQQIREMSLFNVRKLSNSYTTDEVKGNIFYFINSNDGYDASRILNTAFLNEIEAQCQGEMLVAVPHQDVLIIADIRNKTGYDVMAHLTMEFFTKGLVPITSLSFGYKQGHLEPIFILGKNNKQKRDPNVIQRLEANRRKFNKDK</sequence>
<feature type="chain" id="PRO_0000171108" description="UPF0354 protein SAR1821">
    <location>
        <begin position="1"/>
        <end position="285"/>
    </location>
</feature>
<proteinExistence type="inferred from homology"/>
<reference key="1">
    <citation type="journal article" date="2004" name="Proc. Natl. Acad. Sci. U.S.A.">
        <title>Complete genomes of two clinical Staphylococcus aureus strains: evidence for the rapid evolution of virulence and drug resistance.</title>
        <authorList>
            <person name="Holden M.T.G."/>
            <person name="Feil E.J."/>
            <person name="Lindsay J.A."/>
            <person name="Peacock S.J."/>
            <person name="Day N.P.J."/>
            <person name="Enright M.C."/>
            <person name="Foster T.J."/>
            <person name="Moore C.E."/>
            <person name="Hurst L."/>
            <person name="Atkin R."/>
            <person name="Barron A."/>
            <person name="Bason N."/>
            <person name="Bentley S.D."/>
            <person name="Chillingworth C."/>
            <person name="Chillingworth T."/>
            <person name="Churcher C."/>
            <person name="Clark L."/>
            <person name="Corton C."/>
            <person name="Cronin A."/>
            <person name="Doggett J."/>
            <person name="Dowd L."/>
            <person name="Feltwell T."/>
            <person name="Hance Z."/>
            <person name="Harris B."/>
            <person name="Hauser H."/>
            <person name="Holroyd S."/>
            <person name="Jagels K."/>
            <person name="James K.D."/>
            <person name="Lennard N."/>
            <person name="Line A."/>
            <person name="Mayes R."/>
            <person name="Moule S."/>
            <person name="Mungall K."/>
            <person name="Ormond D."/>
            <person name="Quail M.A."/>
            <person name="Rabbinowitsch E."/>
            <person name="Rutherford K.M."/>
            <person name="Sanders M."/>
            <person name="Sharp S."/>
            <person name="Simmonds M."/>
            <person name="Stevens K."/>
            <person name="Whitehead S."/>
            <person name="Barrell B.G."/>
            <person name="Spratt B.G."/>
            <person name="Parkhill J."/>
        </authorList>
    </citation>
    <scope>NUCLEOTIDE SEQUENCE [LARGE SCALE GENOMIC DNA]</scope>
    <source>
        <strain>MRSA252</strain>
    </source>
</reference>
<evidence type="ECO:0000255" key="1">
    <source>
        <dbReference type="HAMAP-Rule" id="MF_01548"/>
    </source>
</evidence>
<organism>
    <name type="scientific">Staphylococcus aureus (strain MRSA252)</name>
    <dbReference type="NCBI Taxonomy" id="282458"/>
    <lineage>
        <taxon>Bacteria</taxon>
        <taxon>Bacillati</taxon>
        <taxon>Bacillota</taxon>
        <taxon>Bacilli</taxon>
        <taxon>Bacillales</taxon>
        <taxon>Staphylococcaceae</taxon>
        <taxon>Staphylococcus</taxon>
    </lineage>
</organism>
<dbReference type="EMBL" id="BX571856">
    <property type="protein sequence ID" value="CAG40812.1"/>
    <property type="molecule type" value="Genomic_DNA"/>
</dbReference>
<dbReference type="RefSeq" id="WP_001091387.1">
    <property type="nucleotide sequence ID" value="NC_002952.2"/>
</dbReference>
<dbReference type="KEGG" id="sar:SAR1821"/>
<dbReference type="HOGENOM" id="CLU_085634_0_0_9"/>
<dbReference type="Proteomes" id="UP000000596">
    <property type="component" value="Chromosome"/>
</dbReference>
<dbReference type="HAMAP" id="MF_01548">
    <property type="entry name" value="UPF0354"/>
    <property type="match status" value="1"/>
</dbReference>
<dbReference type="InterPro" id="IPR010838">
    <property type="entry name" value="DUF1444"/>
</dbReference>
<dbReference type="NCBIfam" id="NF010189">
    <property type="entry name" value="PRK13668.1"/>
    <property type="match status" value="1"/>
</dbReference>
<dbReference type="Pfam" id="PF07285">
    <property type="entry name" value="DUF1444"/>
    <property type="match status" value="1"/>
</dbReference>
<dbReference type="PIRSF" id="PIRSF012562">
    <property type="entry name" value="UCP012562"/>
    <property type="match status" value="1"/>
</dbReference>
<accession>Q6GFW5</accession>
<name>Y1821_STAAR</name>
<gene>
    <name type="ordered locus">SAR1821</name>
</gene>